<name>RS6_NEIGO</name>
<feature type="chain" id="PRO_0000176803" description="Small ribosomal subunit protein bS6">
    <location>
        <begin position="1"/>
        <end position="122"/>
    </location>
</feature>
<keyword id="KW-0687">Ribonucleoprotein</keyword>
<keyword id="KW-0689">Ribosomal protein</keyword>
<keyword id="KW-0694">RNA-binding</keyword>
<keyword id="KW-0699">rRNA-binding</keyword>
<accession>O07813</accession>
<sequence>MRHYEIVFIVHPDQSEQVPAMVERYKTMITEANGKIHRLEDWGRRQLAYPINKIHKAHYVLMNIETTPEVVGELETAFRFNDAVLRHLTIKTKHAVTEASPMLGGEKAKNLLVGAAEEAAAQ</sequence>
<comment type="function">
    <text evidence="1">Binds together with bS18 to 16S ribosomal RNA.</text>
</comment>
<comment type="similarity">
    <text evidence="2">Belongs to the bacterial ribosomal protein bS6 family.</text>
</comment>
<protein>
    <recommendedName>
        <fullName evidence="2">Small ribosomal subunit protein bS6</fullName>
    </recommendedName>
    <alternativeName>
        <fullName>30S ribosomal protein S6</fullName>
    </alternativeName>
</protein>
<evidence type="ECO:0000250" key="1"/>
<evidence type="ECO:0000305" key="2"/>
<gene>
    <name type="primary">rpsF</name>
</gene>
<dbReference type="EMBL" id="AF003196">
    <property type="protein sequence ID" value="AAB61228.1"/>
    <property type="molecule type" value="Genomic_DNA"/>
</dbReference>
<dbReference type="RefSeq" id="WP_003688967.1">
    <property type="nucleotide sequence ID" value="NZ_WHPL01000002.1"/>
</dbReference>
<dbReference type="SMR" id="O07813"/>
<dbReference type="GeneID" id="66752921"/>
<dbReference type="GO" id="GO:0022627">
    <property type="term" value="C:cytosolic small ribosomal subunit"/>
    <property type="evidence" value="ECO:0007669"/>
    <property type="project" value="TreeGrafter"/>
</dbReference>
<dbReference type="GO" id="GO:0070181">
    <property type="term" value="F:small ribosomal subunit rRNA binding"/>
    <property type="evidence" value="ECO:0007669"/>
    <property type="project" value="TreeGrafter"/>
</dbReference>
<dbReference type="GO" id="GO:0003735">
    <property type="term" value="F:structural constituent of ribosome"/>
    <property type="evidence" value="ECO:0007669"/>
    <property type="project" value="InterPro"/>
</dbReference>
<dbReference type="GO" id="GO:0006412">
    <property type="term" value="P:translation"/>
    <property type="evidence" value="ECO:0007669"/>
    <property type="project" value="UniProtKB-UniRule"/>
</dbReference>
<dbReference type="CDD" id="cd00473">
    <property type="entry name" value="bS6"/>
    <property type="match status" value="1"/>
</dbReference>
<dbReference type="FunFam" id="3.30.70.60:FF:000003">
    <property type="entry name" value="30S ribosomal protein S6"/>
    <property type="match status" value="1"/>
</dbReference>
<dbReference type="Gene3D" id="3.30.70.60">
    <property type="match status" value="1"/>
</dbReference>
<dbReference type="HAMAP" id="MF_00360">
    <property type="entry name" value="Ribosomal_bS6"/>
    <property type="match status" value="1"/>
</dbReference>
<dbReference type="InterPro" id="IPR000529">
    <property type="entry name" value="Ribosomal_bS6"/>
</dbReference>
<dbReference type="InterPro" id="IPR020815">
    <property type="entry name" value="Ribosomal_bS6_CS"/>
</dbReference>
<dbReference type="InterPro" id="IPR035980">
    <property type="entry name" value="Ribosomal_bS6_sf"/>
</dbReference>
<dbReference type="InterPro" id="IPR020814">
    <property type="entry name" value="Ribosomal_S6_plastid/chlpt"/>
</dbReference>
<dbReference type="InterPro" id="IPR014717">
    <property type="entry name" value="Transl_elong_EF1B/ribsomal_bS6"/>
</dbReference>
<dbReference type="NCBIfam" id="TIGR00166">
    <property type="entry name" value="S6"/>
    <property type="match status" value="1"/>
</dbReference>
<dbReference type="PANTHER" id="PTHR21011">
    <property type="entry name" value="MITOCHONDRIAL 28S RIBOSOMAL PROTEIN S6"/>
    <property type="match status" value="1"/>
</dbReference>
<dbReference type="PANTHER" id="PTHR21011:SF1">
    <property type="entry name" value="SMALL RIBOSOMAL SUBUNIT PROTEIN BS6M"/>
    <property type="match status" value="1"/>
</dbReference>
<dbReference type="Pfam" id="PF01250">
    <property type="entry name" value="Ribosomal_S6"/>
    <property type="match status" value="1"/>
</dbReference>
<dbReference type="SUPFAM" id="SSF54995">
    <property type="entry name" value="Ribosomal protein S6"/>
    <property type="match status" value="1"/>
</dbReference>
<dbReference type="PROSITE" id="PS01048">
    <property type="entry name" value="RIBOSOMAL_S6"/>
    <property type="match status" value="1"/>
</dbReference>
<proteinExistence type="inferred from homology"/>
<reference key="1">
    <citation type="submission" date="1997-05" db="EMBL/GenBank/DDBJ databases">
        <authorList>
            <person name="Ropp P.A."/>
            <person name="Nicholas R.A."/>
        </authorList>
    </citation>
    <scope>NUCLEOTIDE SEQUENCE [GENOMIC DNA]</scope>
    <source>
        <strain>FA19</strain>
    </source>
</reference>
<organism>
    <name type="scientific">Neisseria gonorrhoeae</name>
    <dbReference type="NCBI Taxonomy" id="485"/>
    <lineage>
        <taxon>Bacteria</taxon>
        <taxon>Pseudomonadati</taxon>
        <taxon>Pseudomonadota</taxon>
        <taxon>Betaproteobacteria</taxon>
        <taxon>Neisseriales</taxon>
        <taxon>Neisseriaceae</taxon>
        <taxon>Neisseria</taxon>
    </lineage>
</organism>